<organism>
    <name type="scientific">Mycobacterium tuberculosis (strain ATCC 25618 / H37Rv)</name>
    <dbReference type="NCBI Taxonomy" id="83332"/>
    <lineage>
        <taxon>Bacteria</taxon>
        <taxon>Bacillati</taxon>
        <taxon>Actinomycetota</taxon>
        <taxon>Actinomycetes</taxon>
        <taxon>Mycobacteriales</taxon>
        <taxon>Mycobacteriaceae</taxon>
        <taxon>Mycobacterium</taxon>
        <taxon>Mycobacterium tuberculosis complex</taxon>
    </lineage>
</organism>
<protein>
    <recommendedName>
        <fullName>Probable arabinosyltransferase C</fullName>
        <ecNumber>2.4.2.-</ecNumber>
    </recommendedName>
</protein>
<feature type="chain" id="PRO_0000220573" description="Probable arabinosyltransferase C">
    <location>
        <begin position="1"/>
        <end position="1094"/>
    </location>
</feature>
<feature type="transmembrane region" description="Helical" evidence="1">
    <location>
        <begin position="28"/>
        <end position="50"/>
    </location>
</feature>
<feature type="transmembrane region" description="Helical" evidence="1">
    <location>
        <begin position="232"/>
        <end position="251"/>
    </location>
</feature>
<feature type="transmembrane region" description="Helical" evidence="1">
    <location>
        <begin position="264"/>
        <end position="286"/>
    </location>
</feature>
<feature type="transmembrane region" description="Helical" evidence="1">
    <location>
        <begin position="341"/>
        <end position="360"/>
    </location>
</feature>
<feature type="transmembrane region" description="Helical" evidence="1">
    <location>
        <begin position="373"/>
        <end position="392"/>
    </location>
</feature>
<feature type="transmembrane region" description="Helical" evidence="1">
    <location>
        <begin position="431"/>
        <end position="453"/>
    </location>
</feature>
<feature type="transmembrane region" description="Helical" evidence="1">
    <location>
        <begin position="466"/>
        <end position="488"/>
    </location>
</feature>
<feature type="transmembrane region" description="Helical" evidence="1">
    <location>
        <begin position="530"/>
        <end position="552"/>
    </location>
</feature>
<feature type="transmembrane region" description="Helical" evidence="1">
    <location>
        <begin position="565"/>
        <end position="582"/>
    </location>
</feature>
<feature type="transmembrane region" description="Helical" evidence="1">
    <location>
        <begin position="586"/>
        <end position="608"/>
    </location>
</feature>
<feature type="transmembrane region" description="Helical" evidence="1">
    <location>
        <begin position="620"/>
        <end position="642"/>
    </location>
</feature>
<feature type="transmembrane region" description="Helical" evidence="1">
    <location>
        <begin position="657"/>
        <end position="679"/>
    </location>
</feature>
<feature type="transmembrane region" description="Helical" evidence="1">
    <location>
        <begin position="700"/>
        <end position="722"/>
    </location>
</feature>
<feature type="region of interest" description="Disordered" evidence="2">
    <location>
        <begin position="817"/>
        <end position="836"/>
    </location>
</feature>
<feature type="compositionally biased region" description="Low complexity" evidence="2">
    <location>
        <begin position="817"/>
        <end position="831"/>
    </location>
</feature>
<feature type="sequence variant" description="Resistance to EMB." evidence="3">
    <original>N</original>
    <variation>D</variation>
    <location>
        <position position="394"/>
    </location>
</feature>
<feature type="sequence variant" description="Resistance to EMB." evidence="3">
    <original>R</original>
    <variation>Q</variation>
    <location>
        <position position="738"/>
    </location>
</feature>
<feature type="helix" evidence="6">
    <location>
        <begin position="736"/>
        <end position="746"/>
    </location>
</feature>
<feature type="helix" evidence="6">
    <location>
        <begin position="750"/>
        <end position="753"/>
    </location>
</feature>
<feature type="strand" evidence="6">
    <location>
        <begin position="755"/>
        <end position="759"/>
    </location>
</feature>
<feature type="helix" evidence="6">
    <location>
        <begin position="761"/>
        <end position="764"/>
    </location>
</feature>
<feature type="strand" evidence="6">
    <location>
        <begin position="768"/>
        <end position="771"/>
    </location>
</feature>
<feature type="helix" evidence="6">
    <location>
        <begin position="773"/>
        <end position="776"/>
    </location>
</feature>
<feature type="strand" evidence="6">
    <location>
        <begin position="779"/>
        <end position="784"/>
    </location>
</feature>
<feature type="helix" evidence="6">
    <location>
        <begin position="845"/>
        <end position="847"/>
    </location>
</feature>
<feature type="strand" evidence="6">
    <location>
        <begin position="856"/>
        <end position="858"/>
    </location>
</feature>
<feature type="strand" evidence="6">
    <location>
        <begin position="862"/>
        <end position="865"/>
    </location>
</feature>
<feature type="strand" evidence="6">
    <location>
        <begin position="881"/>
        <end position="889"/>
    </location>
</feature>
<feature type="helix" evidence="6">
    <location>
        <begin position="893"/>
        <end position="895"/>
    </location>
</feature>
<feature type="strand" evidence="6">
    <location>
        <begin position="896"/>
        <end position="901"/>
    </location>
</feature>
<feature type="helix" evidence="6">
    <location>
        <begin position="903"/>
        <end position="907"/>
    </location>
</feature>
<feature type="strand" evidence="6">
    <location>
        <begin position="912"/>
        <end position="916"/>
    </location>
</feature>
<feature type="strand" evidence="6">
    <location>
        <begin position="918"/>
        <end position="921"/>
    </location>
</feature>
<feature type="strand" evidence="6">
    <location>
        <begin position="923"/>
        <end position="925"/>
    </location>
</feature>
<feature type="strand" evidence="6">
    <location>
        <begin position="927"/>
        <end position="932"/>
    </location>
</feature>
<feature type="helix" evidence="6">
    <location>
        <begin position="933"/>
        <end position="935"/>
    </location>
</feature>
<feature type="strand" evidence="6">
    <location>
        <begin position="942"/>
        <end position="949"/>
    </location>
</feature>
<feature type="strand" evidence="6">
    <location>
        <begin position="958"/>
        <end position="960"/>
    </location>
</feature>
<feature type="helix" evidence="6">
    <location>
        <begin position="971"/>
        <end position="975"/>
    </location>
</feature>
<feature type="turn" evidence="6">
    <location>
        <begin position="976"/>
        <end position="978"/>
    </location>
</feature>
<feature type="strand" evidence="6">
    <location>
        <begin position="979"/>
        <end position="982"/>
    </location>
</feature>
<feature type="helix" evidence="6">
    <location>
        <begin position="985"/>
        <end position="988"/>
    </location>
</feature>
<feature type="strand" evidence="6">
    <location>
        <begin position="994"/>
        <end position="996"/>
    </location>
</feature>
<feature type="helix" evidence="6">
    <location>
        <begin position="1000"/>
        <end position="1002"/>
    </location>
</feature>
<feature type="strand" evidence="6">
    <location>
        <begin position="1009"/>
        <end position="1012"/>
    </location>
</feature>
<feature type="turn" evidence="6">
    <location>
        <begin position="1036"/>
        <end position="1039"/>
    </location>
</feature>
<feature type="strand" evidence="6">
    <location>
        <begin position="1040"/>
        <end position="1049"/>
    </location>
</feature>
<feature type="strand" evidence="6">
    <location>
        <begin position="1059"/>
        <end position="1065"/>
    </location>
</feature>
<dbReference type="EC" id="2.4.2.-"/>
<dbReference type="EMBL" id="U68480">
    <property type="protein sequence ID" value="AAC45279.1"/>
    <property type="molecule type" value="Genomic_DNA"/>
</dbReference>
<dbReference type="EMBL" id="AL123456">
    <property type="protein sequence ID" value="CCP46622.1"/>
    <property type="molecule type" value="Genomic_DNA"/>
</dbReference>
<dbReference type="PIR" id="E70697">
    <property type="entry name" value="E70697"/>
</dbReference>
<dbReference type="RefSeq" id="NP_218310.1">
    <property type="nucleotide sequence ID" value="NC_000962.3"/>
</dbReference>
<dbReference type="RefSeq" id="WP_003901726.1">
    <property type="nucleotide sequence ID" value="NZ_NVQJ01000009.1"/>
</dbReference>
<dbReference type="PDB" id="3PTY">
    <property type="method" value="X-ray"/>
    <property type="resolution" value="2.00 A"/>
    <property type="chains" value="A=719-1094"/>
</dbReference>
<dbReference type="PDBsum" id="3PTY"/>
<dbReference type="SMR" id="P9WNL5"/>
<dbReference type="FunCoup" id="P9WNL5">
    <property type="interactions" value="12"/>
</dbReference>
<dbReference type="STRING" id="83332.Rv3793"/>
<dbReference type="DrugBank" id="DB00330">
    <property type="generic name" value="Ethambutol"/>
</dbReference>
<dbReference type="DrugCentral" id="P9WNL5"/>
<dbReference type="CAZy" id="GT53">
    <property type="family name" value="Glycosyltransferase Family 53"/>
</dbReference>
<dbReference type="TCDB" id="9.B.364.1.5">
    <property type="family name" value="the putative arabinosyltransferase b (aratb) family"/>
</dbReference>
<dbReference type="PaxDb" id="83332-Rv3793"/>
<dbReference type="GeneID" id="886112"/>
<dbReference type="KEGG" id="mtu:Rv3793"/>
<dbReference type="KEGG" id="mtv:RVBD_3793"/>
<dbReference type="TubercuList" id="Rv3793"/>
<dbReference type="eggNOG" id="COG1807">
    <property type="taxonomic scope" value="Bacteria"/>
</dbReference>
<dbReference type="InParanoid" id="P9WNL5"/>
<dbReference type="OrthoDB" id="3584570at2"/>
<dbReference type="PhylomeDB" id="P9WNL5"/>
<dbReference type="BioCyc" id="MetaCyc:G185E-8089-MONOMER"/>
<dbReference type="EvolutionaryTrace" id="P9WNL5"/>
<dbReference type="Proteomes" id="UP000001584">
    <property type="component" value="Chromosome"/>
</dbReference>
<dbReference type="GO" id="GO:0005829">
    <property type="term" value="C:cytosol"/>
    <property type="evidence" value="ECO:0007005"/>
    <property type="project" value="MTBBASE"/>
</dbReference>
<dbReference type="GO" id="GO:0005886">
    <property type="term" value="C:plasma membrane"/>
    <property type="evidence" value="ECO:0007669"/>
    <property type="project" value="UniProtKB-SubCell"/>
</dbReference>
<dbReference type="GO" id="GO:0052636">
    <property type="term" value="F:arabinosyltransferase activity"/>
    <property type="evidence" value="ECO:0000315"/>
    <property type="project" value="MTBBASE"/>
</dbReference>
<dbReference type="GO" id="GO:0071766">
    <property type="term" value="P:Actinobacterium-type cell wall biogenesis"/>
    <property type="evidence" value="ECO:0007669"/>
    <property type="project" value="InterPro"/>
</dbReference>
<dbReference type="GO" id="GO:0071555">
    <property type="term" value="P:cell wall organization"/>
    <property type="evidence" value="ECO:0007669"/>
    <property type="project" value="UniProtKB-KW"/>
</dbReference>
<dbReference type="GO" id="GO:0009247">
    <property type="term" value="P:glycolipid biosynthetic process"/>
    <property type="evidence" value="ECO:0000315"/>
    <property type="project" value="MTBBASE"/>
</dbReference>
<dbReference type="GO" id="GO:0046677">
    <property type="term" value="P:response to antibiotic"/>
    <property type="evidence" value="ECO:0007669"/>
    <property type="project" value="UniProtKB-KW"/>
</dbReference>
<dbReference type="FunFam" id="2.60.120.610:FF:000001">
    <property type="entry name" value="Probable arabinosyltransferase C"/>
    <property type="match status" value="1"/>
</dbReference>
<dbReference type="Gene3D" id="3.40.190.160">
    <property type="match status" value="1"/>
</dbReference>
<dbReference type="Gene3D" id="2.60.120.610">
    <property type="entry name" value="arabinofuranosyltransferase like domain"/>
    <property type="match status" value="1"/>
</dbReference>
<dbReference type="Gene3D" id="2.60.120.940">
    <property type="entry name" value="EmbC, C-terminal domain, subdomain 2"/>
    <property type="match status" value="1"/>
</dbReference>
<dbReference type="InterPro" id="IPR032731">
    <property type="entry name" value="Arabino_trans_C"/>
</dbReference>
<dbReference type="InterPro" id="IPR042486">
    <property type="entry name" value="Arabino_trans_C_2"/>
</dbReference>
<dbReference type="InterPro" id="IPR007680">
    <property type="entry name" value="Arabino_trans_central"/>
</dbReference>
<dbReference type="InterPro" id="IPR040920">
    <property type="entry name" value="Arabino_trans_N"/>
</dbReference>
<dbReference type="InterPro" id="IPR027451">
    <property type="entry name" value="EmbABC_dom1"/>
</dbReference>
<dbReference type="Pfam" id="PF14896">
    <property type="entry name" value="Arabino_trans_C"/>
    <property type="match status" value="1"/>
</dbReference>
<dbReference type="Pfam" id="PF17689">
    <property type="entry name" value="Arabino_trans_N"/>
    <property type="match status" value="1"/>
</dbReference>
<dbReference type="Pfam" id="PF04602">
    <property type="entry name" value="Arabinose_trans"/>
    <property type="match status" value="1"/>
</dbReference>
<proteinExistence type="evidence at protein level"/>
<sequence length="1094" mass="117490">MATEAAPPRIAVRLPSTSVRDAGANYRIARYVAVVAGLLGAVLAIATPLLPVNQTTAQLNWPQNGTFASVEAPLIGYVATDLNITVPCQAAAGLAGSQNTGKTVLLSTVPKQAPKAVDRGLLLQRANDDLVLVVRNVPLVTAPLSQVLGPTCQRLTFTAHADRVAAEFVGLVQGPNAEHPGAPLRGERSGYDFRPQIVGVFTDLAGPAPPGLSFSASVDTRYSSSPTPLKMAAMILGVALTGAALVALHILDTADGMRHRRFLPARWWSTGGLDTLVIAVLVWWHFVGANTSDDGYILTMARVSEHAGYMANYYRWFGTPEAPFGWYYDLLALWAHVSTASIWMRLPTLAMALTCWWVISREVIPRLGHAVKTSRAAAWTAAGMFLAVWLPLDNGLRPEPIIALGILLTWCSVERAVATSRLLPVAIACIIGALTLFSGPTGIASIGALLVAIGPLRTILHRRSRRFGVLPLVAPILAAATVTAIPIFRDQTFAGEIQANLLKRAVGPSLKWFDEHIRYERLFMASPDGSIARRFAVLALVLALAVSVAMSLRKGRIPGTAAGPSRRIIGITIISFLAMMFTPTKWTHHFGVFAGLAGSLGALAAVAVTGAAMRSRRNRTVFAAVVVFVLALSFASVNGWWYVSNFGVPWSNSFPKWRWSLTTALLELTVLVLLLAAWFHFVANGDGRRTARPTRFRARLAGIVQSPLAIATWLLVLFEVVSLTQAMISQYPAWSVGRSNLQALAGKTCGLAEDVLVELDPNAGMLAPVTAPLADALGAGLSEAFTPNGIPADVTADPVMERPGDRSFLNDDGLITGSEPGTEGGTTAAPGINGSRARLPYNLDPARTPVLGSWRAGVQVPAMLRSGWYRLPTNEQRDRAPLLVVTAAGRFDSREVRLQWATDEQAAAGHHGGSMEFADVGAAPAWRNLRAPLSAIPSTATQVRLVADDQDLAPQHWIALTPPRIPRVRTLQNVVGAADPVFLDWLVGLAFPCQRPFGHQYGVDETPKWRILPDRFGAEANSPVMDHNGGGPLGITELLMRATTVASYLKDDWFRDWGALQRLTPYYPDAQPADLNLGTVTRSGLWSPAPLRRG</sequence>
<keyword id="KW-0002">3D-structure</keyword>
<keyword id="KW-0046">Antibiotic resistance</keyword>
<keyword id="KW-1003">Cell membrane</keyword>
<keyword id="KW-0961">Cell wall biogenesis/degradation</keyword>
<keyword id="KW-0328">Glycosyltransferase</keyword>
<keyword id="KW-0472">Membrane</keyword>
<keyword id="KW-1185">Reference proteome</keyword>
<keyword id="KW-0808">Transferase</keyword>
<keyword id="KW-0812">Transmembrane</keyword>
<keyword id="KW-1133">Transmembrane helix</keyword>
<reference key="1">
    <citation type="journal article" date="1997" name="Nat. Med.">
        <title>The emb operon, a gene cluster of Mycobacterium tuberculosis involved in resistance to ethambutol.</title>
        <authorList>
            <person name="Telenti A."/>
            <person name="Philipp W.J."/>
            <person name="Sreevatsan S."/>
            <person name="Bernasconi C."/>
            <person name="Stockbauer K.E."/>
            <person name="Wieles B."/>
            <person name="Musser J.M."/>
            <person name="Jacobs W.R. Jr."/>
        </authorList>
    </citation>
    <scope>NUCLEOTIDE SEQUENCE [GENOMIC DNA]</scope>
    <source>
        <strain>ATCC 25618 / H37Rv</strain>
    </source>
</reference>
<reference key="2">
    <citation type="journal article" date="1998" name="Nature">
        <title>Deciphering the biology of Mycobacterium tuberculosis from the complete genome sequence.</title>
        <authorList>
            <person name="Cole S.T."/>
            <person name="Brosch R."/>
            <person name="Parkhill J."/>
            <person name="Garnier T."/>
            <person name="Churcher C.M."/>
            <person name="Harris D.E."/>
            <person name="Gordon S.V."/>
            <person name="Eiglmeier K."/>
            <person name="Gas S."/>
            <person name="Barry C.E. III"/>
            <person name="Tekaia F."/>
            <person name="Badcock K."/>
            <person name="Basham D."/>
            <person name="Brown D."/>
            <person name="Chillingworth T."/>
            <person name="Connor R."/>
            <person name="Davies R.M."/>
            <person name="Devlin K."/>
            <person name="Feltwell T."/>
            <person name="Gentles S."/>
            <person name="Hamlin N."/>
            <person name="Holroyd S."/>
            <person name="Hornsby T."/>
            <person name="Jagels K."/>
            <person name="Krogh A."/>
            <person name="McLean J."/>
            <person name="Moule S."/>
            <person name="Murphy L.D."/>
            <person name="Oliver S."/>
            <person name="Osborne J."/>
            <person name="Quail M.A."/>
            <person name="Rajandream M.A."/>
            <person name="Rogers J."/>
            <person name="Rutter S."/>
            <person name="Seeger K."/>
            <person name="Skelton S."/>
            <person name="Squares S."/>
            <person name="Squares R."/>
            <person name="Sulston J.E."/>
            <person name="Taylor K."/>
            <person name="Whitehead S."/>
            <person name="Barrell B.G."/>
        </authorList>
    </citation>
    <scope>NUCLEOTIDE SEQUENCE [LARGE SCALE GENOMIC DNA]</scope>
    <source>
        <strain>ATCC 25618 / H37Rv</strain>
    </source>
</reference>
<reference key="3">
    <citation type="journal article" date="2006" name="J. Bacteriol.">
        <title>Transcriptional control of the mycobacterial embCAB operon by PknH through a regulatory protein, EmbR, in vivo.</title>
        <authorList>
            <person name="Sharma K."/>
            <person name="Gupta M."/>
            <person name="Pathak M."/>
            <person name="Gupta N."/>
            <person name="Koul A."/>
            <person name="Sarangi S."/>
            <person name="Baweja R."/>
            <person name="Singh Y."/>
        </authorList>
    </citation>
    <scope>INDUCTION</scope>
</reference>
<reference key="4">
    <citation type="journal article" date="2008" name="BMC Syst. Biol.">
        <title>targetTB: a target identification pipeline for Mycobacterium tuberculosis through an interactome, reactome and genome-scale structural analysis.</title>
        <authorList>
            <person name="Raman K."/>
            <person name="Yeturu K."/>
            <person name="Chandra N."/>
        </authorList>
    </citation>
    <scope>IDENTIFICATION AS A DRUG TARGET [LARGE SCALE ANALYSIS]</scope>
</reference>
<reference key="5">
    <citation type="journal article" date="2011" name="Mol. Cell. Proteomics">
        <title>Proteogenomic analysis of Mycobacterium tuberculosis by high resolution mass spectrometry.</title>
        <authorList>
            <person name="Kelkar D.S."/>
            <person name="Kumar D."/>
            <person name="Kumar P."/>
            <person name="Balakrishnan L."/>
            <person name="Muthusamy B."/>
            <person name="Yadav A.K."/>
            <person name="Shrivastava P."/>
            <person name="Marimuthu A."/>
            <person name="Anand S."/>
            <person name="Sundaram H."/>
            <person name="Kingsbury R."/>
            <person name="Harsha H.C."/>
            <person name="Nair B."/>
            <person name="Prasad T.S."/>
            <person name="Chauhan D.S."/>
            <person name="Katoch K."/>
            <person name="Katoch V.M."/>
            <person name="Kumar P."/>
            <person name="Chaerkady R."/>
            <person name="Ramachandran S."/>
            <person name="Dash D."/>
            <person name="Pandey A."/>
        </authorList>
    </citation>
    <scope>IDENTIFICATION BY MASS SPECTROMETRY [LARGE SCALE ANALYSIS]</scope>
    <source>
        <strain>ATCC 25618 / H37Rv</strain>
    </source>
</reference>
<reference key="6">
    <citation type="journal article" date="2000" name="Antimicrob. Agents Chemother.">
        <title>Molecular genetic analysis of nucleotide polymorphisms associated with ethambutol resistance in human isolates of Mycobacterium tuberculosis.</title>
        <authorList>
            <person name="Ramaswamy S.V."/>
            <person name="Amin A.G."/>
            <person name="Goeksel S."/>
            <person name="Stager C.E."/>
            <person name="Dou S.-J."/>
            <person name="El Sahly H."/>
            <person name="Moghazeh S.L."/>
            <person name="Kreiswirth B.N."/>
            <person name="Musser J.M."/>
        </authorList>
    </citation>
    <scope>VARIANTS EMB RESISTANT ASP-394 AND GLN-738</scope>
</reference>
<accession>P9WNL5</accession>
<accession>L0TF98</accession>
<accession>O08116</accession>
<accession>P72059</accession>
<evidence type="ECO:0000255" key="1"/>
<evidence type="ECO:0000256" key="2">
    <source>
        <dbReference type="SAM" id="MobiDB-lite"/>
    </source>
</evidence>
<evidence type="ECO:0000269" key="3">
    <source>
    </source>
</evidence>
<evidence type="ECO:0000269" key="4">
    <source>
    </source>
</evidence>
<evidence type="ECO:0000305" key="5"/>
<evidence type="ECO:0007829" key="6">
    <source>
        <dbReference type="PDB" id="3PTY"/>
    </source>
</evidence>
<gene>
    <name type="primary">embC</name>
    <name type="ordered locus">Rv3793</name>
    <name type="ORF">MTCY13D12.27</name>
</gene>
<comment type="function">
    <text>Arabinosyl transferase responsible for the polymerization of arabinose into the arabinan of arabinogalactan.</text>
</comment>
<comment type="subcellular location">
    <subcellularLocation>
        <location evidence="5">Cell membrane</location>
        <topology evidence="5">Multi-pass membrane protein</topology>
    </subcellularLocation>
</comment>
<comment type="induction">
    <text evidence="4">Positively regulated by the transcriptional regulatory protein EmbR.</text>
</comment>
<comment type="miscellaneous">
    <text>This is one of the targets of the anti-tuberculosis drug ethambutol [(S,S')-2,2'-(ethylenediimino)di-1-butanol; EMB]. EMB is a first-line drug used to treat tuberculosis. EMB inhibits the transfer of arabinogalactan into the cell wall.</text>
</comment>
<comment type="miscellaneous">
    <text>Was identified as a high-confidence drug target.</text>
</comment>
<comment type="similarity">
    <text evidence="5">Belongs to the emb family.</text>
</comment>
<name>EMBC_MYCTU</name>